<comment type="subcellular location">
    <subcellularLocation>
        <location evidence="4">Cell projection</location>
        <location evidence="4">Cilium</location>
        <location evidence="4">Flagellum</location>
    </subcellularLocation>
</comment>
<sequence length="192" mass="20901">MKKVKKKRSEARRHRDSTSQHASSNSTSQQPSPESTPQQPSPESTPQQPSPESTPQHSSLETTSRQPAFQALPAPEIRRSSCCLLSPDANVKAAPQSRKAGPLIRAGPHSCSCATCPCSSACWRRLGLCHSRIFDVLLPRDWQMAPGRGLPNLLTFYRKSSRKPSSHRNACPPSPRNCGCGSGGSRSCLLHH</sequence>
<name>SPTA3_HUMAN</name>
<evidence type="ECO:0000256" key="1">
    <source>
        <dbReference type="SAM" id="MobiDB-lite"/>
    </source>
</evidence>
<evidence type="ECO:0000269" key="2">
    <source>
    </source>
</evidence>
<evidence type="ECO:0000269" key="3">
    <source>
    </source>
</evidence>
<evidence type="ECO:0000269" key="4">
    <source>
    </source>
</evidence>
<evidence type="ECO:0000305" key="5"/>
<keyword id="KW-0966">Cell projection</keyword>
<keyword id="KW-0969">Cilium</keyword>
<keyword id="KW-0282">Flagellum</keyword>
<keyword id="KW-1267">Proteomics identification</keyword>
<keyword id="KW-1185">Reference proteome</keyword>
<organism>
    <name type="scientific">Homo sapiens</name>
    <name type="common">Human</name>
    <dbReference type="NCBI Taxonomy" id="9606"/>
    <lineage>
        <taxon>Eukaryota</taxon>
        <taxon>Metazoa</taxon>
        <taxon>Chordata</taxon>
        <taxon>Craniata</taxon>
        <taxon>Vertebrata</taxon>
        <taxon>Euteleostomi</taxon>
        <taxon>Mammalia</taxon>
        <taxon>Eutheria</taxon>
        <taxon>Euarchontoglires</taxon>
        <taxon>Primates</taxon>
        <taxon>Haplorrhini</taxon>
        <taxon>Catarrhini</taxon>
        <taxon>Hominidae</taxon>
        <taxon>Homo</taxon>
    </lineage>
</organism>
<dbReference type="EMBL" id="AY032925">
    <property type="protein sequence ID" value="AAK54455.1"/>
    <property type="molecule type" value="mRNA"/>
</dbReference>
<dbReference type="EMBL" id="AK093385">
    <property type="protein sequence ID" value="BAC04149.1"/>
    <property type="molecule type" value="mRNA"/>
</dbReference>
<dbReference type="EMBL" id="AC009407">
    <property type="status" value="NOT_ANNOTATED_CDS"/>
    <property type="molecule type" value="Genomic_DNA"/>
</dbReference>
<dbReference type="EMBL" id="AC105344">
    <property type="status" value="NOT_ANNOTATED_CDS"/>
    <property type="molecule type" value="Genomic_DNA"/>
</dbReference>
<dbReference type="EMBL" id="BC047704">
    <property type="protein sequence ID" value="AAH47704.1"/>
    <property type="molecule type" value="mRNA"/>
</dbReference>
<dbReference type="CCDS" id="CCDS2481.1"/>
<dbReference type="RefSeq" id="NP_620712.2">
    <property type="nucleotide sequence ID" value="NM_139073.3"/>
</dbReference>
<dbReference type="RefSeq" id="XP_005246360.1">
    <property type="nucleotide sequence ID" value="XM_005246303.3"/>
</dbReference>
<dbReference type="RefSeq" id="XP_016858852.1">
    <property type="nucleotide sequence ID" value="XM_017003363.3"/>
</dbReference>
<dbReference type="RefSeq" id="XP_054196520.1">
    <property type="nucleotide sequence ID" value="XM_054340545.1"/>
</dbReference>
<dbReference type="RefSeq" id="XP_054196521.1">
    <property type="nucleotide sequence ID" value="XM_054340546.1"/>
</dbReference>
<dbReference type="BioGRID" id="126241">
    <property type="interactions" value="22"/>
</dbReference>
<dbReference type="FunCoup" id="Q8NHX4">
    <property type="interactions" value="1"/>
</dbReference>
<dbReference type="IntAct" id="Q8NHX4">
    <property type="interactions" value="1"/>
</dbReference>
<dbReference type="STRING" id="9606.ENSP00000388895"/>
<dbReference type="iPTMnet" id="Q8NHX4"/>
<dbReference type="PhosphoSitePlus" id="Q8NHX4"/>
<dbReference type="BioMuta" id="SPATA3"/>
<dbReference type="DMDM" id="41704647"/>
<dbReference type="MassIVE" id="Q8NHX4"/>
<dbReference type="PaxDb" id="9606-ENSP00000388895"/>
<dbReference type="PeptideAtlas" id="Q8NHX4"/>
<dbReference type="ProteomicsDB" id="73781"/>
<dbReference type="Antibodypedia" id="11837">
    <property type="antibodies" value="41 antibodies from 20 providers"/>
</dbReference>
<dbReference type="DNASU" id="130560"/>
<dbReference type="Ensembl" id="ENST00000424440.5">
    <property type="protein sequence ID" value="ENSP00000399514.1"/>
    <property type="gene ID" value="ENSG00000173699.17"/>
</dbReference>
<dbReference type="Ensembl" id="ENST00000433428.7">
    <property type="protein sequence ID" value="ENSP00000403804.2"/>
    <property type="gene ID" value="ENSG00000173699.17"/>
</dbReference>
<dbReference type="Ensembl" id="ENST00000452881.5">
    <property type="protein sequence ID" value="ENSP00000388895.1"/>
    <property type="gene ID" value="ENSG00000173699.17"/>
</dbReference>
<dbReference type="Ensembl" id="ENST00000455816.1">
    <property type="protein sequence ID" value="ENSP00000388741.1"/>
    <property type="gene ID" value="ENSG00000173699.17"/>
</dbReference>
<dbReference type="GeneID" id="130560"/>
<dbReference type="KEGG" id="hsa:130560"/>
<dbReference type="MANE-Select" id="ENST00000433428.7">
    <property type="protein sequence ID" value="ENSP00000403804.2"/>
    <property type="RefSeq nucleotide sequence ID" value="NM_139073.5"/>
    <property type="RefSeq protein sequence ID" value="NP_620712.2"/>
</dbReference>
<dbReference type="UCSC" id="uc002vri.5">
    <property type="organism name" value="human"/>
</dbReference>
<dbReference type="AGR" id="HGNC:17884"/>
<dbReference type="CTD" id="130560"/>
<dbReference type="DisGeNET" id="130560"/>
<dbReference type="GeneCards" id="SPATA3"/>
<dbReference type="HGNC" id="HGNC:17884">
    <property type="gene designation" value="SPATA3"/>
</dbReference>
<dbReference type="HPA" id="ENSG00000173699">
    <property type="expression patterns" value="Tissue enriched (testis)"/>
</dbReference>
<dbReference type="MIM" id="619857">
    <property type="type" value="gene"/>
</dbReference>
<dbReference type="neXtProt" id="NX_Q8NHX4"/>
<dbReference type="OpenTargets" id="ENSG00000173699"/>
<dbReference type="PharmGKB" id="PA38256"/>
<dbReference type="VEuPathDB" id="HostDB:ENSG00000173699"/>
<dbReference type="eggNOG" id="ENOG502TDUQ">
    <property type="taxonomic scope" value="Eukaryota"/>
</dbReference>
<dbReference type="GeneTree" id="ENSGT00390000003032"/>
<dbReference type="HOGENOM" id="CLU_099077_0_0_1"/>
<dbReference type="InParanoid" id="Q8NHX4"/>
<dbReference type="OMA" id="CSYATCP"/>
<dbReference type="OrthoDB" id="9023213at2759"/>
<dbReference type="PAN-GO" id="Q8NHX4">
    <property type="GO annotations" value="0 GO annotations based on evolutionary models"/>
</dbReference>
<dbReference type="PhylomeDB" id="Q8NHX4"/>
<dbReference type="TreeFam" id="TF338040"/>
<dbReference type="PathwayCommons" id="Q8NHX4"/>
<dbReference type="BioGRID-ORCS" id="130560">
    <property type="hits" value="14 hits in 1143 CRISPR screens"/>
</dbReference>
<dbReference type="ChiTaRS" id="SPATA3">
    <property type="organism name" value="human"/>
</dbReference>
<dbReference type="GenomeRNAi" id="130560"/>
<dbReference type="Pharos" id="Q8NHX4">
    <property type="development level" value="Tdark"/>
</dbReference>
<dbReference type="PRO" id="PR:Q8NHX4"/>
<dbReference type="Proteomes" id="UP000005640">
    <property type="component" value="Chromosome 2"/>
</dbReference>
<dbReference type="RNAct" id="Q8NHX4">
    <property type="molecule type" value="protein"/>
</dbReference>
<dbReference type="Bgee" id="ENSG00000173699">
    <property type="expression patterns" value="Expressed in sperm and 115 other cell types or tissues"/>
</dbReference>
<dbReference type="ExpressionAtlas" id="Q8NHX4">
    <property type="expression patterns" value="baseline and differential"/>
</dbReference>
<dbReference type="GO" id="GO:0036126">
    <property type="term" value="C:sperm flagellum"/>
    <property type="evidence" value="ECO:0000314"/>
    <property type="project" value="UniProtKB"/>
</dbReference>
<dbReference type="InterPro" id="IPR026717">
    <property type="entry name" value="SPATA3"/>
</dbReference>
<dbReference type="PANTHER" id="PTHR22234:SF0">
    <property type="entry name" value="SPERMATOGENESIS-ASSOCIATED PROTEIN 3"/>
    <property type="match status" value="1"/>
</dbReference>
<dbReference type="PANTHER" id="PTHR22234">
    <property type="entry name" value="TESTIS SPERMATOCYTE APOPTOSIS-RELATED GENE 1 PROTEIN"/>
    <property type="match status" value="1"/>
</dbReference>
<dbReference type="Pfam" id="PF15662">
    <property type="entry name" value="SPATA3"/>
    <property type="match status" value="1"/>
</dbReference>
<gene>
    <name type="primary">SPATA3</name>
    <name type="synonym">TSARG1</name>
</gene>
<protein>
    <recommendedName>
        <fullName>Spermatogenesis-associated protein 3</fullName>
    </recommendedName>
    <alternativeName>
        <fullName>Testis and spermatogenesis cell-related protein 1</fullName>
    </alternativeName>
    <alternativeName>
        <fullName>Testis spermatocyte apoptosis-related protein 1</fullName>
    </alternativeName>
</protein>
<reference key="1">
    <citation type="journal article" date="2003" name="Yi Chuan Xue Bao">
        <title>Molecular cloning for testis spermatogenesis cell apoptosis related gene TSARG1 and Mtsarg1 and expression analysis for Mtsarg1 gene.</title>
        <authorList>
            <person name="Fu J.J."/>
            <person name="Lu G.X."/>
            <person name="Li L.Y."/>
            <person name="Liu G."/>
            <person name="Xing X.W."/>
            <person name="Liu S.F."/>
        </authorList>
    </citation>
    <scope>NUCLEOTIDE SEQUENCE [MRNA]</scope>
    <scope>VARIANT 41-SER--PRO-49 DEL</scope>
    <source>
        <tissue>Testis</tissue>
    </source>
</reference>
<reference key="2">
    <citation type="journal article" date="2004" name="Nat. Genet.">
        <title>Complete sequencing and characterization of 21,243 full-length human cDNAs.</title>
        <authorList>
            <person name="Ota T."/>
            <person name="Suzuki Y."/>
            <person name="Nishikawa T."/>
            <person name="Otsuki T."/>
            <person name="Sugiyama T."/>
            <person name="Irie R."/>
            <person name="Wakamatsu A."/>
            <person name="Hayashi K."/>
            <person name="Sato H."/>
            <person name="Nagai K."/>
            <person name="Kimura K."/>
            <person name="Makita H."/>
            <person name="Sekine M."/>
            <person name="Obayashi M."/>
            <person name="Nishi T."/>
            <person name="Shibahara T."/>
            <person name="Tanaka T."/>
            <person name="Ishii S."/>
            <person name="Yamamoto J."/>
            <person name="Saito K."/>
            <person name="Kawai Y."/>
            <person name="Isono Y."/>
            <person name="Nakamura Y."/>
            <person name="Nagahari K."/>
            <person name="Murakami K."/>
            <person name="Yasuda T."/>
            <person name="Iwayanagi T."/>
            <person name="Wagatsuma M."/>
            <person name="Shiratori A."/>
            <person name="Sudo H."/>
            <person name="Hosoiri T."/>
            <person name="Kaku Y."/>
            <person name="Kodaira H."/>
            <person name="Kondo H."/>
            <person name="Sugawara M."/>
            <person name="Takahashi M."/>
            <person name="Kanda K."/>
            <person name="Yokoi T."/>
            <person name="Furuya T."/>
            <person name="Kikkawa E."/>
            <person name="Omura Y."/>
            <person name="Abe K."/>
            <person name="Kamihara K."/>
            <person name="Katsuta N."/>
            <person name="Sato K."/>
            <person name="Tanikawa M."/>
            <person name="Yamazaki M."/>
            <person name="Ninomiya K."/>
            <person name="Ishibashi T."/>
            <person name="Yamashita H."/>
            <person name="Murakawa K."/>
            <person name="Fujimori K."/>
            <person name="Tanai H."/>
            <person name="Kimata M."/>
            <person name="Watanabe M."/>
            <person name="Hiraoka S."/>
            <person name="Chiba Y."/>
            <person name="Ishida S."/>
            <person name="Ono Y."/>
            <person name="Takiguchi S."/>
            <person name="Watanabe S."/>
            <person name="Yosida M."/>
            <person name="Hotuta T."/>
            <person name="Kusano J."/>
            <person name="Kanehori K."/>
            <person name="Takahashi-Fujii A."/>
            <person name="Hara H."/>
            <person name="Tanase T.-O."/>
            <person name="Nomura Y."/>
            <person name="Togiya S."/>
            <person name="Komai F."/>
            <person name="Hara R."/>
            <person name="Takeuchi K."/>
            <person name="Arita M."/>
            <person name="Imose N."/>
            <person name="Musashino K."/>
            <person name="Yuuki H."/>
            <person name="Oshima A."/>
            <person name="Sasaki N."/>
            <person name="Aotsuka S."/>
            <person name="Yoshikawa Y."/>
            <person name="Matsunawa H."/>
            <person name="Ichihara T."/>
            <person name="Shiohata N."/>
            <person name="Sano S."/>
            <person name="Moriya S."/>
            <person name="Momiyama H."/>
            <person name="Satoh N."/>
            <person name="Takami S."/>
            <person name="Terashima Y."/>
            <person name="Suzuki O."/>
            <person name="Nakagawa S."/>
            <person name="Senoh A."/>
            <person name="Mizoguchi H."/>
            <person name="Goto Y."/>
            <person name="Shimizu F."/>
            <person name="Wakebe H."/>
            <person name="Hishigaki H."/>
            <person name="Watanabe T."/>
            <person name="Sugiyama A."/>
            <person name="Takemoto M."/>
            <person name="Kawakami B."/>
            <person name="Yamazaki M."/>
            <person name="Watanabe K."/>
            <person name="Kumagai A."/>
            <person name="Itakura S."/>
            <person name="Fukuzumi Y."/>
            <person name="Fujimori Y."/>
            <person name="Komiyama M."/>
            <person name="Tashiro H."/>
            <person name="Tanigami A."/>
            <person name="Fujiwara T."/>
            <person name="Ono T."/>
            <person name="Yamada K."/>
            <person name="Fujii Y."/>
            <person name="Ozaki K."/>
            <person name="Hirao M."/>
            <person name="Ohmori Y."/>
            <person name="Kawabata A."/>
            <person name="Hikiji T."/>
            <person name="Kobatake N."/>
            <person name="Inagaki H."/>
            <person name="Ikema Y."/>
            <person name="Okamoto S."/>
            <person name="Okitani R."/>
            <person name="Kawakami T."/>
            <person name="Noguchi S."/>
            <person name="Itoh T."/>
            <person name="Shigeta K."/>
            <person name="Senba T."/>
            <person name="Matsumura K."/>
            <person name="Nakajima Y."/>
            <person name="Mizuno T."/>
            <person name="Morinaga M."/>
            <person name="Sasaki M."/>
            <person name="Togashi T."/>
            <person name="Oyama M."/>
            <person name="Hata H."/>
            <person name="Watanabe M."/>
            <person name="Komatsu T."/>
            <person name="Mizushima-Sugano J."/>
            <person name="Satoh T."/>
            <person name="Shirai Y."/>
            <person name="Takahashi Y."/>
            <person name="Nakagawa K."/>
            <person name="Okumura K."/>
            <person name="Nagase T."/>
            <person name="Nomura N."/>
            <person name="Kikuchi H."/>
            <person name="Masuho Y."/>
            <person name="Yamashita R."/>
            <person name="Nakai K."/>
            <person name="Yada T."/>
            <person name="Nakamura Y."/>
            <person name="Ohara O."/>
            <person name="Isogai T."/>
            <person name="Sugano S."/>
        </authorList>
    </citation>
    <scope>NUCLEOTIDE SEQUENCE [LARGE SCALE MRNA]</scope>
    <scope>VARIANT 41-SER--PRO-49 DEL</scope>
    <source>
        <tissue>Testis</tissue>
    </source>
</reference>
<reference key="3">
    <citation type="journal article" date="2005" name="Nature">
        <title>Generation and annotation of the DNA sequences of human chromosomes 2 and 4.</title>
        <authorList>
            <person name="Hillier L.W."/>
            <person name="Graves T.A."/>
            <person name="Fulton R.S."/>
            <person name="Fulton L.A."/>
            <person name="Pepin K.H."/>
            <person name="Minx P."/>
            <person name="Wagner-McPherson C."/>
            <person name="Layman D."/>
            <person name="Wylie K."/>
            <person name="Sekhon M."/>
            <person name="Becker M.C."/>
            <person name="Fewell G.A."/>
            <person name="Delehaunty K.D."/>
            <person name="Miner T.L."/>
            <person name="Nash W.E."/>
            <person name="Kremitzki C."/>
            <person name="Oddy L."/>
            <person name="Du H."/>
            <person name="Sun H."/>
            <person name="Bradshaw-Cordum H."/>
            <person name="Ali J."/>
            <person name="Carter J."/>
            <person name="Cordes M."/>
            <person name="Harris A."/>
            <person name="Isak A."/>
            <person name="van Brunt A."/>
            <person name="Nguyen C."/>
            <person name="Du F."/>
            <person name="Courtney L."/>
            <person name="Kalicki J."/>
            <person name="Ozersky P."/>
            <person name="Abbott S."/>
            <person name="Armstrong J."/>
            <person name="Belter E.A."/>
            <person name="Caruso L."/>
            <person name="Cedroni M."/>
            <person name="Cotton M."/>
            <person name="Davidson T."/>
            <person name="Desai A."/>
            <person name="Elliott G."/>
            <person name="Erb T."/>
            <person name="Fronick C."/>
            <person name="Gaige T."/>
            <person name="Haakenson W."/>
            <person name="Haglund K."/>
            <person name="Holmes A."/>
            <person name="Harkins R."/>
            <person name="Kim K."/>
            <person name="Kruchowski S.S."/>
            <person name="Strong C.M."/>
            <person name="Grewal N."/>
            <person name="Goyea E."/>
            <person name="Hou S."/>
            <person name="Levy A."/>
            <person name="Martinka S."/>
            <person name="Mead K."/>
            <person name="McLellan M.D."/>
            <person name="Meyer R."/>
            <person name="Randall-Maher J."/>
            <person name="Tomlinson C."/>
            <person name="Dauphin-Kohlberg S."/>
            <person name="Kozlowicz-Reilly A."/>
            <person name="Shah N."/>
            <person name="Swearengen-Shahid S."/>
            <person name="Snider J."/>
            <person name="Strong J.T."/>
            <person name="Thompson J."/>
            <person name="Yoakum M."/>
            <person name="Leonard S."/>
            <person name="Pearman C."/>
            <person name="Trani L."/>
            <person name="Radionenko M."/>
            <person name="Waligorski J.E."/>
            <person name="Wang C."/>
            <person name="Rock S.M."/>
            <person name="Tin-Wollam A.-M."/>
            <person name="Maupin R."/>
            <person name="Latreille P."/>
            <person name="Wendl M.C."/>
            <person name="Yang S.-P."/>
            <person name="Pohl C."/>
            <person name="Wallis J.W."/>
            <person name="Spieth J."/>
            <person name="Bieri T.A."/>
            <person name="Berkowicz N."/>
            <person name="Nelson J.O."/>
            <person name="Osborne J."/>
            <person name="Ding L."/>
            <person name="Meyer R."/>
            <person name="Sabo A."/>
            <person name="Shotland Y."/>
            <person name="Sinha P."/>
            <person name="Wohldmann P.E."/>
            <person name="Cook L.L."/>
            <person name="Hickenbotham M.T."/>
            <person name="Eldred J."/>
            <person name="Williams D."/>
            <person name="Jones T.A."/>
            <person name="She X."/>
            <person name="Ciccarelli F.D."/>
            <person name="Izaurralde E."/>
            <person name="Taylor J."/>
            <person name="Schmutz J."/>
            <person name="Myers R.M."/>
            <person name="Cox D.R."/>
            <person name="Huang X."/>
            <person name="McPherson J.D."/>
            <person name="Mardis E.R."/>
            <person name="Clifton S.W."/>
            <person name="Warren W.C."/>
            <person name="Chinwalla A.T."/>
            <person name="Eddy S.R."/>
            <person name="Marra M.A."/>
            <person name="Ovcharenko I."/>
            <person name="Furey T.S."/>
            <person name="Miller W."/>
            <person name="Eichler E.E."/>
            <person name="Bork P."/>
            <person name="Suyama M."/>
            <person name="Torrents D."/>
            <person name="Waterston R.H."/>
            <person name="Wilson R.K."/>
        </authorList>
    </citation>
    <scope>NUCLEOTIDE SEQUENCE [LARGE SCALE GENOMIC DNA]</scope>
</reference>
<reference key="4">
    <citation type="journal article" date="2004" name="Genome Res.">
        <title>The status, quality, and expansion of the NIH full-length cDNA project: the Mammalian Gene Collection (MGC).</title>
        <authorList>
            <consortium name="The MGC Project Team"/>
        </authorList>
    </citation>
    <scope>NUCLEOTIDE SEQUENCE [LARGE SCALE MRNA]</scope>
    <source>
        <tissue>Brain</tissue>
    </source>
</reference>
<reference key="5">
    <citation type="journal article" date="2019" name="J. Proteome Res.">
        <title>Cell Type-Specific Expression of Testis Elevated Genes Based on Transcriptomics and Antibody-Based Proteomics.</title>
        <authorList>
            <person name="Pineau C."/>
            <person name="Hikmet F."/>
            <person name="Zhang C."/>
            <person name="Oksvold P."/>
            <person name="Chen S."/>
            <person name="Fagerberg L."/>
            <person name="Uhlen M."/>
            <person name="Lindskog C."/>
        </authorList>
    </citation>
    <scope>SUBCELLULAR LOCATION</scope>
</reference>
<feature type="chain" id="PRO_0000072174" description="Spermatogenesis-associated protein 3">
    <location>
        <begin position="1"/>
        <end position="192"/>
    </location>
</feature>
<feature type="region of interest" description="Disordered" evidence="1">
    <location>
        <begin position="1"/>
        <end position="65"/>
    </location>
</feature>
<feature type="region of interest" description="Disordered" evidence="1">
    <location>
        <begin position="161"/>
        <end position="184"/>
    </location>
</feature>
<feature type="compositionally biased region" description="Basic residues" evidence="1">
    <location>
        <begin position="1"/>
        <end position="15"/>
    </location>
</feature>
<feature type="compositionally biased region" description="Low complexity" evidence="1">
    <location>
        <begin position="19"/>
        <end position="59"/>
    </location>
</feature>
<feature type="sequence variant" id="VAR_070808" evidence="2 3">
    <location>
        <begin position="41"/>
        <end position="49"/>
    </location>
</feature>
<feature type="sequence conflict" description="In Ref. 4; AAH47704." evidence="5" ref="4">
    <original>I</original>
    <variation>T</variation>
    <location>
        <position position="104"/>
    </location>
</feature>
<proteinExistence type="evidence at protein level"/>
<accession>Q8NHX4</accession>
<accession>Q86WX5</accession>
<accession>Q8N9Y6</accession>